<gene>
    <name type="primary">Slc18a2</name>
    <name type="synonym">Vmat2</name>
</gene>
<proteinExistence type="evidence at protein level"/>
<evidence type="ECO:0000250" key="1"/>
<evidence type="ECO:0000250" key="2">
    <source>
        <dbReference type="UniProtKB" id="Q01827"/>
    </source>
</evidence>
<evidence type="ECO:0000250" key="3">
    <source>
        <dbReference type="UniProtKB" id="Q05940"/>
    </source>
</evidence>
<evidence type="ECO:0000255" key="4"/>
<evidence type="ECO:0000256" key="5">
    <source>
        <dbReference type="SAM" id="MobiDB-lite"/>
    </source>
</evidence>
<evidence type="ECO:0000269" key="6">
    <source>
    </source>
</evidence>
<evidence type="ECO:0000269" key="7">
    <source>
    </source>
</evidence>
<evidence type="ECO:0000269" key="8">
    <source>
    </source>
</evidence>
<evidence type="ECO:0000305" key="9"/>
<protein>
    <recommendedName>
        <fullName>Synaptic vesicular amine transporter</fullName>
    </recommendedName>
    <alternativeName>
        <fullName>Monoamine transporter</fullName>
    </alternativeName>
    <alternativeName>
        <fullName>Solute carrier family 18 member 2</fullName>
    </alternativeName>
    <alternativeName>
        <fullName>Vesicular amine transporter 2</fullName>
        <shortName>VAT2</shortName>
    </alternativeName>
    <alternativeName>
        <fullName evidence="3">Vesicular monoamine transporter 2</fullName>
    </alternativeName>
</protein>
<organism>
    <name type="scientific">Mus musculus</name>
    <name type="common">Mouse</name>
    <dbReference type="NCBI Taxonomy" id="10090"/>
    <lineage>
        <taxon>Eukaryota</taxon>
        <taxon>Metazoa</taxon>
        <taxon>Chordata</taxon>
        <taxon>Craniata</taxon>
        <taxon>Vertebrata</taxon>
        <taxon>Euteleostomi</taxon>
        <taxon>Mammalia</taxon>
        <taxon>Eutheria</taxon>
        <taxon>Euarchontoglires</taxon>
        <taxon>Glires</taxon>
        <taxon>Rodentia</taxon>
        <taxon>Myomorpha</taxon>
        <taxon>Muroidea</taxon>
        <taxon>Muridae</taxon>
        <taxon>Murinae</taxon>
        <taxon>Mus</taxon>
        <taxon>Mus</taxon>
    </lineage>
</organism>
<accession>Q8BRU6</accession>
<accession>Q8CC55</accession>
<reference key="1">
    <citation type="submission" date="2003-04" db="EMBL/GenBank/DDBJ databases">
        <title>Molecular cloning and pharmacological characterization of the mouse vesicular monoamine transporter 2 (mVMAT2).</title>
        <authorList>
            <person name="Gilsbach R."/>
            <person name="Bonisch H."/>
            <person name="Bruess M."/>
        </authorList>
    </citation>
    <scope>NUCLEOTIDE SEQUENCE [MRNA]</scope>
    <source>
        <strain>C57BL/6J</strain>
        <tissue>Brain</tissue>
    </source>
</reference>
<reference key="2">
    <citation type="journal article" date="2005" name="Science">
        <title>The transcriptional landscape of the mammalian genome.</title>
        <authorList>
            <person name="Carninci P."/>
            <person name="Kasukawa T."/>
            <person name="Katayama S."/>
            <person name="Gough J."/>
            <person name="Frith M.C."/>
            <person name="Maeda N."/>
            <person name="Oyama R."/>
            <person name="Ravasi T."/>
            <person name="Lenhard B."/>
            <person name="Wells C."/>
            <person name="Kodzius R."/>
            <person name="Shimokawa K."/>
            <person name="Bajic V.B."/>
            <person name="Brenner S.E."/>
            <person name="Batalov S."/>
            <person name="Forrest A.R."/>
            <person name="Zavolan M."/>
            <person name="Davis M.J."/>
            <person name="Wilming L.G."/>
            <person name="Aidinis V."/>
            <person name="Allen J.E."/>
            <person name="Ambesi-Impiombato A."/>
            <person name="Apweiler R."/>
            <person name="Aturaliya R.N."/>
            <person name="Bailey T.L."/>
            <person name="Bansal M."/>
            <person name="Baxter L."/>
            <person name="Beisel K.W."/>
            <person name="Bersano T."/>
            <person name="Bono H."/>
            <person name="Chalk A.M."/>
            <person name="Chiu K.P."/>
            <person name="Choudhary V."/>
            <person name="Christoffels A."/>
            <person name="Clutterbuck D.R."/>
            <person name="Crowe M.L."/>
            <person name="Dalla E."/>
            <person name="Dalrymple B.P."/>
            <person name="de Bono B."/>
            <person name="Della Gatta G."/>
            <person name="di Bernardo D."/>
            <person name="Down T."/>
            <person name="Engstrom P."/>
            <person name="Fagiolini M."/>
            <person name="Faulkner G."/>
            <person name="Fletcher C.F."/>
            <person name="Fukushima T."/>
            <person name="Furuno M."/>
            <person name="Futaki S."/>
            <person name="Gariboldi M."/>
            <person name="Georgii-Hemming P."/>
            <person name="Gingeras T.R."/>
            <person name="Gojobori T."/>
            <person name="Green R.E."/>
            <person name="Gustincich S."/>
            <person name="Harbers M."/>
            <person name="Hayashi Y."/>
            <person name="Hensch T.K."/>
            <person name="Hirokawa N."/>
            <person name="Hill D."/>
            <person name="Huminiecki L."/>
            <person name="Iacono M."/>
            <person name="Ikeo K."/>
            <person name="Iwama A."/>
            <person name="Ishikawa T."/>
            <person name="Jakt M."/>
            <person name="Kanapin A."/>
            <person name="Katoh M."/>
            <person name="Kawasawa Y."/>
            <person name="Kelso J."/>
            <person name="Kitamura H."/>
            <person name="Kitano H."/>
            <person name="Kollias G."/>
            <person name="Krishnan S.P."/>
            <person name="Kruger A."/>
            <person name="Kummerfeld S.K."/>
            <person name="Kurochkin I.V."/>
            <person name="Lareau L.F."/>
            <person name="Lazarevic D."/>
            <person name="Lipovich L."/>
            <person name="Liu J."/>
            <person name="Liuni S."/>
            <person name="McWilliam S."/>
            <person name="Madan Babu M."/>
            <person name="Madera M."/>
            <person name="Marchionni L."/>
            <person name="Matsuda H."/>
            <person name="Matsuzawa S."/>
            <person name="Miki H."/>
            <person name="Mignone F."/>
            <person name="Miyake S."/>
            <person name="Morris K."/>
            <person name="Mottagui-Tabar S."/>
            <person name="Mulder N."/>
            <person name="Nakano N."/>
            <person name="Nakauchi H."/>
            <person name="Ng P."/>
            <person name="Nilsson R."/>
            <person name="Nishiguchi S."/>
            <person name="Nishikawa S."/>
            <person name="Nori F."/>
            <person name="Ohara O."/>
            <person name="Okazaki Y."/>
            <person name="Orlando V."/>
            <person name="Pang K.C."/>
            <person name="Pavan W.J."/>
            <person name="Pavesi G."/>
            <person name="Pesole G."/>
            <person name="Petrovsky N."/>
            <person name="Piazza S."/>
            <person name="Reed J."/>
            <person name="Reid J.F."/>
            <person name="Ring B.Z."/>
            <person name="Ringwald M."/>
            <person name="Rost B."/>
            <person name="Ruan Y."/>
            <person name="Salzberg S.L."/>
            <person name="Sandelin A."/>
            <person name="Schneider C."/>
            <person name="Schoenbach C."/>
            <person name="Sekiguchi K."/>
            <person name="Semple C.A."/>
            <person name="Seno S."/>
            <person name="Sessa L."/>
            <person name="Sheng Y."/>
            <person name="Shibata Y."/>
            <person name="Shimada H."/>
            <person name="Shimada K."/>
            <person name="Silva D."/>
            <person name="Sinclair B."/>
            <person name="Sperling S."/>
            <person name="Stupka E."/>
            <person name="Sugiura K."/>
            <person name="Sultana R."/>
            <person name="Takenaka Y."/>
            <person name="Taki K."/>
            <person name="Tammoja K."/>
            <person name="Tan S.L."/>
            <person name="Tang S."/>
            <person name="Taylor M.S."/>
            <person name="Tegner J."/>
            <person name="Teichmann S.A."/>
            <person name="Ueda H.R."/>
            <person name="van Nimwegen E."/>
            <person name="Verardo R."/>
            <person name="Wei C.L."/>
            <person name="Yagi K."/>
            <person name="Yamanishi H."/>
            <person name="Zabarovsky E."/>
            <person name="Zhu S."/>
            <person name="Zimmer A."/>
            <person name="Hide W."/>
            <person name="Bult C."/>
            <person name="Grimmond S.M."/>
            <person name="Teasdale R.D."/>
            <person name="Liu E.T."/>
            <person name="Brusic V."/>
            <person name="Quackenbush J."/>
            <person name="Wahlestedt C."/>
            <person name="Mattick J.S."/>
            <person name="Hume D.A."/>
            <person name="Kai C."/>
            <person name="Sasaki D."/>
            <person name="Tomaru Y."/>
            <person name="Fukuda S."/>
            <person name="Kanamori-Katayama M."/>
            <person name="Suzuki M."/>
            <person name="Aoki J."/>
            <person name="Arakawa T."/>
            <person name="Iida J."/>
            <person name="Imamura K."/>
            <person name="Itoh M."/>
            <person name="Kato T."/>
            <person name="Kawaji H."/>
            <person name="Kawagashira N."/>
            <person name="Kawashima T."/>
            <person name="Kojima M."/>
            <person name="Kondo S."/>
            <person name="Konno H."/>
            <person name="Nakano K."/>
            <person name="Ninomiya N."/>
            <person name="Nishio T."/>
            <person name="Okada M."/>
            <person name="Plessy C."/>
            <person name="Shibata K."/>
            <person name="Shiraki T."/>
            <person name="Suzuki S."/>
            <person name="Tagami M."/>
            <person name="Waki K."/>
            <person name="Watahiki A."/>
            <person name="Okamura-Oho Y."/>
            <person name="Suzuki H."/>
            <person name="Kawai J."/>
            <person name="Hayashizaki Y."/>
        </authorList>
    </citation>
    <scope>NUCLEOTIDE SEQUENCE [LARGE SCALE MRNA]</scope>
    <source>
        <strain>C57BL/6J</strain>
        <tissue>Aorta</tissue>
        <tissue>Diencephalon</tissue>
        <tissue>Vein</tissue>
    </source>
</reference>
<reference key="3">
    <citation type="journal article" date="1997" name="Neuron">
        <title>Knockout of the vesicular monoamine transporter 2 gene results in neonatal death and supersensitivity to cocaine and amphetamine.</title>
        <authorList>
            <person name="Wang Y.M."/>
            <person name="Gainetdinov R.R."/>
            <person name="Fumagalli F."/>
            <person name="Xu F."/>
            <person name="Jones S.R."/>
            <person name="Bock C.B."/>
            <person name="Miller G.W."/>
            <person name="Wightman R.M."/>
            <person name="Caron M.G."/>
        </authorList>
    </citation>
    <scope>FUNCTION</scope>
    <scope>SUBCELLULAR LOCATION</scope>
    <scope>TISSUE SPECIFICITY</scope>
    <scope>DISRUPTION PHENOTYPE</scope>
</reference>
<reference key="4">
    <citation type="journal article" date="2000" name="Proc. Natl. Acad. Sci. U.S.A.">
        <title>Differential quantal release of histamine and 5-hydroxytryptamine from mast cells of vesicular monoamine transporter 2 knockout mice.</title>
        <authorList>
            <person name="Travis E.R."/>
            <person name="Wang Y.M."/>
            <person name="Michael D.J."/>
            <person name="Caron M.G."/>
            <person name="Wightman R.M."/>
        </authorList>
    </citation>
    <scope>FUNCTION</scope>
</reference>
<reference key="5">
    <citation type="journal article" date="2009" name="J. Neurosci.">
        <title>Physical and functional interaction between the dopamine transporter and the synaptic vesicle protein synaptogyrin-3.</title>
        <authorList>
            <person name="Egana L.A."/>
            <person name="Cuevas R.A."/>
            <person name="Baust T.B."/>
            <person name="Parra L.A."/>
            <person name="Leak R.K."/>
            <person name="Hochendoner S."/>
            <person name="Pena K."/>
            <person name="Quiroz M."/>
            <person name="Hong W.C."/>
            <person name="Dorostkar M.M."/>
            <person name="Janz R."/>
            <person name="Sitte H.H."/>
            <person name="Torres G.E."/>
        </authorList>
    </citation>
    <scope>INTERACTION WITH SLC6A3</scope>
</reference>
<keyword id="KW-0966">Cell projection</keyword>
<keyword id="KW-0968">Cytoplasmic vesicle</keyword>
<keyword id="KW-1015">Disulfide bond</keyword>
<keyword id="KW-0325">Glycoprotein</keyword>
<keyword id="KW-0472">Membrane</keyword>
<keyword id="KW-0532">Neurotransmitter transport</keyword>
<keyword id="KW-0597">Phosphoprotein</keyword>
<keyword id="KW-1185">Reference proteome</keyword>
<keyword id="KW-0770">Synapse</keyword>
<keyword id="KW-0812">Transmembrane</keyword>
<keyword id="KW-1133">Transmembrane helix</keyword>
<keyword id="KW-0813">Transport</keyword>
<name>VMAT2_MOUSE</name>
<dbReference type="EMBL" id="AJ555564">
    <property type="protein sequence ID" value="CAD88262.1"/>
    <property type="molecule type" value="mRNA"/>
</dbReference>
<dbReference type="EMBL" id="AK033871">
    <property type="protein sequence ID" value="BAC28501.1"/>
    <property type="molecule type" value="mRNA"/>
</dbReference>
<dbReference type="EMBL" id="AK041274">
    <property type="protein sequence ID" value="BAC30887.1"/>
    <property type="molecule type" value="mRNA"/>
</dbReference>
<dbReference type="CCDS" id="CCDS29935.1"/>
<dbReference type="RefSeq" id="NP_766111.1">
    <property type="nucleotide sequence ID" value="NM_172523.3"/>
</dbReference>
<dbReference type="SMR" id="Q8BRU6"/>
<dbReference type="CORUM" id="Q8BRU6"/>
<dbReference type="FunCoup" id="Q8BRU6">
    <property type="interactions" value="152"/>
</dbReference>
<dbReference type="MINT" id="Q8BRU6"/>
<dbReference type="STRING" id="10090.ENSMUSP00000026084"/>
<dbReference type="BindingDB" id="Q8BRU6"/>
<dbReference type="ChEMBL" id="CHEMBL4295886"/>
<dbReference type="DrugBank" id="DB01126">
    <property type="generic name" value="Dutasteride"/>
</dbReference>
<dbReference type="DrugCentral" id="Q8BRU6"/>
<dbReference type="GlyCosmos" id="Q8BRU6">
    <property type="glycosylation" value="5 sites, No reported glycans"/>
</dbReference>
<dbReference type="GlyGen" id="Q8BRU6">
    <property type="glycosylation" value="6 sites, 1 N-linked glycan (1 site), 1 O-linked glycan (1 site)"/>
</dbReference>
<dbReference type="iPTMnet" id="Q8BRU6"/>
<dbReference type="PhosphoSitePlus" id="Q8BRU6"/>
<dbReference type="PaxDb" id="10090-ENSMUSP00000026084"/>
<dbReference type="ProteomicsDB" id="297607"/>
<dbReference type="Antibodypedia" id="2802">
    <property type="antibodies" value="416 antibodies from 37 providers"/>
</dbReference>
<dbReference type="DNASU" id="214084"/>
<dbReference type="Ensembl" id="ENSMUST00000026084.5">
    <property type="protein sequence ID" value="ENSMUSP00000026084.4"/>
    <property type="gene ID" value="ENSMUSG00000025094.9"/>
</dbReference>
<dbReference type="GeneID" id="214084"/>
<dbReference type="KEGG" id="mmu:214084"/>
<dbReference type="UCSC" id="uc008ibi.2">
    <property type="organism name" value="mouse"/>
</dbReference>
<dbReference type="AGR" id="MGI:106677"/>
<dbReference type="CTD" id="6571"/>
<dbReference type="MGI" id="MGI:106677">
    <property type="gene designation" value="Slc18a2"/>
</dbReference>
<dbReference type="VEuPathDB" id="HostDB:ENSMUSG00000025094"/>
<dbReference type="eggNOG" id="KOG3764">
    <property type="taxonomic scope" value="Eukaryota"/>
</dbReference>
<dbReference type="GeneTree" id="ENSGT00940000157593"/>
<dbReference type="HOGENOM" id="CLU_001265_10_9_1"/>
<dbReference type="InParanoid" id="Q8BRU6"/>
<dbReference type="OMA" id="IVAPLWG"/>
<dbReference type="OrthoDB" id="5086884at2759"/>
<dbReference type="PhylomeDB" id="Q8BRU6"/>
<dbReference type="TreeFam" id="TF313494"/>
<dbReference type="Reactome" id="R-MMU-181429">
    <property type="pathway name" value="Serotonin Neurotransmitter Release Cycle"/>
</dbReference>
<dbReference type="Reactome" id="R-MMU-181430">
    <property type="pathway name" value="Norepinephrine Neurotransmitter Release Cycle"/>
</dbReference>
<dbReference type="Reactome" id="R-MMU-212676">
    <property type="pathway name" value="Dopamine Neurotransmitter Release Cycle"/>
</dbReference>
<dbReference type="Reactome" id="R-MMU-442660">
    <property type="pathway name" value="Na+/Cl- dependent neurotransmitter transporters"/>
</dbReference>
<dbReference type="BioGRID-ORCS" id="214084">
    <property type="hits" value="3 hits in 80 CRISPR screens"/>
</dbReference>
<dbReference type="PRO" id="PR:Q8BRU6"/>
<dbReference type="Proteomes" id="UP000000589">
    <property type="component" value="Chromosome 19"/>
</dbReference>
<dbReference type="RNAct" id="Q8BRU6">
    <property type="molecule type" value="protein"/>
</dbReference>
<dbReference type="Bgee" id="ENSMUSG00000025094">
    <property type="expression patterns" value="Expressed in ventral tegmental area and 166 other cell types or tissues"/>
</dbReference>
<dbReference type="GO" id="GO:0030424">
    <property type="term" value="C:axon"/>
    <property type="evidence" value="ECO:0000250"/>
    <property type="project" value="UniProtKB"/>
</dbReference>
<dbReference type="GO" id="GO:0005813">
    <property type="term" value="C:centrosome"/>
    <property type="evidence" value="ECO:0007669"/>
    <property type="project" value="Ensembl"/>
</dbReference>
<dbReference type="GO" id="GO:0030425">
    <property type="term" value="C:dendrite"/>
    <property type="evidence" value="ECO:0000250"/>
    <property type="project" value="UniProtKB"/>
</dbReference>
<dbReference type="GO" id="GO:0098691">
    <property type="term" value="C:dopaminergic synapse"/>
    <property type="evidence" value="ECO:0000314"/>
    <property type="project" value="SynGO"/>
</dbReference>
<dbReference type="GO" id="GO:0030667">
    <property type="term" value="C:secretory granule membrane"/>
    <property type="evidence" value="ECO:0000250"/>
    <property type="project" value="UniProtKB"/>
</dbReference>
<dbReference type="GO" id="GO:0030672">
    <property type="term" value="C:synaptic vesicle membrane"/>
    <property type="evidence" value="ECO:0000314"/>
    <property type="project" value="UniProtKB"/>
</dbReference>
<dbReference type="GO" id="GO:0015311">
    <property type="term" value="F:monoamine:proton antiporter activity"/>
    <property type="evidence" value="ECO:0007669"/>
    <property type="project" value="Ensembl"/>
</dbReference>
<dbReference type="GO" id="GO:0042910">
    <property type="term" value="F:xenobiotic transmembrane transporter activity"/>
    <property type="evidence" value="ECO:0007669"/>
    <property type="project" value="InterPro"/>
</dbReference>
<dbReference type="GO" id="GO:0002553">
    <property type="term" value="P:histamine secretion by mast cell"/>
    <property type="evidence" value="ECO:0000315"/>
    <property type="project" value="UniProtKB"/>
</dbReference>
<dbReference type="GO" id="GO:0051615">
    <property type="term" value="P:histamine uptake"/>
    <property type="evidence" value="ECO:0007669"/>
    <property type="project" value="Ensembl"/>
</dbReference>
<dbReference type="GO" id="GO:0007626">
    <property type="term" value="P:locomotory behavior"/>
    <property type="evidence" value="ECO:0000315"/>
    <property type="project" value="MGI"/>
</dbReference>
<dbReference type="GO" id="GO:0098700">
    <property type="term" value="P:neurotransmitter loading into synaptic vesicle"/>
    <property type="evidence" value="ECO:0000314"/>
    <property type="project" value="SynGO"/>
</dbReference>
<dbReference type="GO" id="GO:0009791">
    <property type="term" value="P:post-embryonic development"/>
    <property type="evidence" value="ECO:0000315"/>
    <property type="project" value="MGI"/>
</dbReference>
<dbReference type="GO" id="GO:0001975">
    <property type="term" value="P:response to amphetamine"/>
    <property type="evidence" value="ECO:0000315"/>
    <property type="project" value="MGI"/>
</dbReference>
<dbReference type="GO" id="GO:0009636">
    <property type="term" value="P:response to toxic substance"/>
    <property type="evidence" value="ECO:0000315"/>
    <property type="project" value="MGI"/>
</dbReference>
<dbReference type="GO" id="GO:0002552">
    <property type="term" value="P:serotonin secretion by mast cell"/>
    <property type="evidence" value="ECO:0000315"/>
    <property type="project" value="UniProtKB"/>
</dbReference>
<dbReference type="GO" id="GO:0051610">
    <property type="term" value="P:serotonin uptake"/>
    <property type="evidence" value="ECO:0007669"/>
    <property type="project" value="Ensembl"/>
</dbReference>
<dbReference type="GO" id="GO:0099123">
    <property type="term" value="P:somato-dendritic dopamine secretion"/>
    <property type="evidence" value="ECO:0000250"/>
    <property type="project" value="UniProtKB"/>
</dbReference>
<dbReference type="CDD" id="cd17384">
    <property type="entry name" value="MFS_SLC18A1_2_VAT1_2"/>
    <property type="match status" value="1"/>
</dbReference>
<dbReference type="FunFam" id="1.20.1250.20:FF:000083">
    <property type="entry name" value="synaptic vesicular amine transporter isoform X1"/>
    <property type="match status" value="1"/>
</dbReference>
<dbReference type="FunFam" id="1.20.1250.20:FF:000116">
    <property type="entry name" value="synaptic vesicular amine transporter isoform X2"/>
    <property type="match status" value="1"/>
</dbReference>
<dbReference type="Gene3D" id="1.20.1250.20">
    <property type="entry name" value="MFS general substrate transporter like domains"/>
    <property type="match status" value="2"/>
</dbReference>
<dbReference type="InterPro" id="IPR011701">
    <property type="entry name" value="MFS"/>
</dbReference>
<dbReference type="InterPro" id="IPR020846">
    <property type="entry name" value="MFS_dom"/>
</dbReference>
<dbReference type="InterPro" id="IPR036259">
    <property type="entry name" value="MFS_trans_sf"/>
</dbReference>
<dbReference type="InterPro" id="IPR050930">
    <property type="entry name" value="MFS_Vesicular_Transporter"/>
</dbReference>
<dbReference type="InterPro" id="IPR004734">
    <property type="entry name" value="Multidrug-R"/>
</dbReference>
<dbReference type="NCBIfam" id="TIGR00880">
    <property type="entry name" value="2_A_01_02"/>
    <property type="match status" value="1"/>
</dbReference>
<dbReference type="PANTHER" id="PTHR23506">
    <property type="entry name" value="GH10249P"/>
    <property type="match status" value="1"/>
</dbReference>
<dbReference type="PANTHER" id="PTHR23506:SF30">
    <property type="entry name" value="SYNAPTIC VESICULAR AMINE TRANSPORTER"/>
    <property type="match status" value="1"/>
</dbReference>
<dbReference type="Pfam" id="PF07690">
    <property type="entry name" value="MFS_1"/>
    <property type="match status" value="1"/>
</dbReference>
<dbReference type="SUPFAM" id="SSF103473">
    <property type="entry name" value="MFS general substrate transporter"/>
    <property type="match status" value="1"/>
</dbReference>
<dbReference type="PROSITE" id="PS50850">
    <property type="entry name" value="MFS"/>
    <property type="match status" value="1"/>
</dbReference>
<comment type="function">
    <text evidence="2 6 8">Electrogenic antiporter that exchanges one cationic monoamine with two intravesicular protons across the membrane of secretory and synaptic vesicles. Uses the electrochemical proton gradient established by the V-type proton-pump ATPase to accumulate high concentrations of monoamines inside the vesicles prior to their release via exocytosis. Transports a variety of catecholamines such as dopamine, adrenaline and noradrenaline, histamine, and indolamines such as serotonin (By similarity) (PubMed:10618388). Regulates the transvesicular monoaminergic gradient that determines the quantal size. Mediates somatodendritic dopamine release in hippocampal neurons, likely as part of a regulated secretory pathway that integrates retrograde synaptic signals (By similarity). Acts as a primary transporter for striatal dopamine loading ensuring impulse-dependent release of dopamine at the synaptic cleft (PubMed:9427251). Responsible for histamine and serotonin storage and subsequent corelease from mast cell granules (By similarity) (PubMed:10618388).</text>
</comment>
<comment type="catalytic activity">
    <reaction evidence="2">
        <text>serotonin(in) + 2 H(+)(out) = serotonin(out) + 2 H(+)(in)</text>
        <dbReference type="Rhea" id="RHEA:73743"/>
        <dbReference type="ChEBI" id="CHEBI:15378"/>
        <dbReference type="ChEBI" id="CHEBI:350546"/>
    </reaction>
    <physiologicalReaction direction="left-to-right" evidence="2">
        <dbReference type="Rhea" id="RHEA:73744"/>
    </physiologicalReaction>
</comment>
<comment type="catalytic activity">
    <reaction evidence="2">
        <text>dopamine(in) + 2 H(+)(out) = dopamine(out) + 2 H(+)(in)</text>
        <dbReference type="Rhea" id="RHEA:73739"/>
        <dbReference type="ChEBI" id="CHEBI:15378"/>
        <dbReference type="ChEBI" id="CHEBI:59905"/>
    </reaction>
    <physiologicalReaction direction="left-to-right" evidence="2">
        <dbReference type="Rhea" id="RHEA:73740"/>
    </physiologicalReaction>
</comment>
<comment type="catalytic activity">
    <reaction evidence="2">
        <text>histamine(in) + 2 H(+)(out) = histamine(out) + 2 H(+)(in)</text>
        <dbReference type="Rhea" id="RHEA:73755"/>
        <dbReference type="ChEBI" id="CHEBI:15378"/>
        <dbReference type="ChEBI" id="CHEBI:58432"/>
    </reaction>
    <physiologicalReaction direction="left-to-right" evidence="2">
        <dbReference type="Rhea" id="RHEA:73756"/>
    </physiologicalReaction>
</comment>
<comment type="activity regulation">
    <text evidence="3">Strongly inhibited by reserpine and tetrabenazine (By similarity). Also inhibited to a lesser extent by ketanserin and fenfluramine (By similarity). Reserpine and ketanserin inhibit by blocking the substrate-binding pocket (By similarity). Tetrabenazine traps SLC18A2/VMAT2 in an occluded conformation and its inhibition is specific to SLC18A2/VMAT2 but not SLC18A1/VMAT1 (By similarity).</text>
</comment>
<comment type="subunit">
    <text evidence="7">Interacts with SLC6A3.</text>
</comment>
<comment type="subcellular location">
    <subcellularLocation>
        <location evidence="8">Cytoplasmic vesicle</location>
        <location evidence="8">Secretory vesicle</location>
        <location evidence="8">Synaptic vesicle membrane</location>
        <topology evidence="4">Multi-pass membrane protein</topology>
    </subcellularLocation>
    <subcellularLocation>
        <location evidence="2">Cytoplasmic vesicle</location>
        <location evidence="2">Secretory vesicle membrane</location>
        <topology evidence="4">Multi-pass membrane protein</topology>
    </subcellularLocation>
    <subcellularLocation>
        <location evidence="2">Cell projection</location>
        <location evidence="2">Axon</location>
    </subcellularLocation>
    <subcellularLocation>
        <location evidence="2">Cell projection</location>
        <location evidence="2">Dendrite</location>
    </subcellularLocation>
    <text evidence="2">Sorted to large dense core granules in neuroendocrine cells, presumably at the level of the trans-Golgi network. In neurons it is predominantly detected in somatodendritic tubulovesicular membranes, a distinct population of secretory vesicles that undergo calcium-dependent exocytosis in axons and dendrites upon depolarization. Localized at synaptic vesicles in axons.</text>
</comment>
<comment type="tissue specificity">
    <text evidence="8">Expressed in striata and substantia nigra.</text>
</comment>
<comment type="disruption phenotype">
    <text evidence="8">Mice are born at the expected Mendelian rate. The homozygous mutants show severe growth retardation and the majority die shortly after birth.</text>
</comment>
<comment type="similarity">
    <text evidence="9">Belongs to the major facilitator superfamily. Vesicular transporter family.</text>
</comment>
<sequence length="517" mass="55754">MALSDLVLLRWLRDSRHSRKLILFIVFLALLLDNMLLTVVVPIIPSYLYSIKHEKNTTEIQTARPALTASTSESFHSIFSYYNNSTVFTGNATGGLPGGESPKATTTQHTVTNTTVPPDCPSEDKDLLNENVQVGLLFASKATVQLLTNPFIGLLTNRIGYPIPMFAGFCIMFISTVMFAFSSSYAFLLIARSLQGIGSSCSSVAGMGMLASVYTDDEERGNAMGIALGGLAMGVLVGPPFGSVLYEFVGKTAPFLVLAALVLLDGAIQLFVLQPSRVQPESQKGTPLTTLLKDPYILIAAGSICFANMGIAMLEPALPIWMMETMCSRKWQLGVAFLPASISYLIGTNIFGILAHKMGRWLCALLGMIVVGISILCIPFAKNIYGLIAPNFGVGFAIGMVDSSMMPIMGYLVDLRHVSVYGSVYAIADVAFCMGYAIGPSAGGAIAKAIGFPWLMTIIGIIDIVFAPLCFFLRSPPAKEEKMAILMDHNCPIKTKMYTQNNVQPYPVGDDEESESD</sequence>
<feature type="chain" id="PRO_0000127515" description="Synaptic vesicular amine transporter">
    <location>
        <begin position="1"/>
        <end position="517"/>
    </location>
</feature>
<feature type="topological domain" description="Cytoplasmic" evidence="3">
    <location>
        <begin position="1"/>
        <end position="20"/>
    </location>
</feature>
<feature type="transmembrane region" description="Helical; Name=1" evidence="3">
    <location>
        <begin position="21"/>
        <end position="41"/>
    </location>
</feature>
<feature type="topological domain" description="Extracellular" evidence="3">
    <location>
        <begin position="42"/>
        <end position="132"/>
    </location>
</feature>
<feature type="transmembrane region" description="Helical; Name=2" evidence="3">
    <location>
        <begin position="133"/>
        <end position="153"/>
    </location>
</feature>
<feature type="topological domain" description="Cytoplasmic" evidence="3">
    <location>
        <begin position="154"/>
        <end position="162"/>
    </location>
</feature>
<feature type="transmembrane region" description="Helical; Name=3" evidence="3">
    <location>
        <begin position="163"/>
        <end position="183"/>
    </location>
</feature>
<feature type="topological domain" description="Extracellular" evidence="3">
    <location>
        <begin position="184"/>
        <end position="192"/>
    </location>
</feature>
<feature type="transmembrane region" description="Helical; Name=4" evidence="3">
    <location>
        <begin position="193"/>
        <end position="213"/>
    </location>
</feature>
<feature type="topological domain" description="Cytoplasmic" evidence="3">
    <location>
        <begin position="214"/>
        <end position="222"/>
    </location>
</feature>
<feature type="transmembrane region" description="Helical; Name=5" evidence="3">
    <location>
        <begin position="223"/>
        <end position="245"/>
    </location>
</feature>
<feature type="topological domain" description="Extracellular" evidence="3">
    <location>
        <begin position="246"/>
        <end position="251"/>
    </location>
</feature>
<feature type="transmembrane region" description="Helical; Name=6" evidence="3">
    <location>
        <begin position="252"/>
        <end position="274"/>
    </location>
</feature>
<feature type="topological domain" description="Cytoplasmic" evidence="3">
    <location>
        <begin position="275"/>
        <end position="294"/>
    </location>
</feature>
<feature type="transmembrane region" description="Helical; Name=7" evidence="3">
    <location>
        <begin position="295"/>
        <end position="314"/>
    </location>
</feature>
<feature type="topological domain" description="Extracellular" evidence="3">
    <location>
        <begin position="315"/>
        <end position="331"/>
    </location>
</feature>
<feature type="transmembrane region" description="Helical; Name=8" evidence="3">
    <location>
        <begin position="332"/>
        <end position="355"/>
    </location>
</feature>
<feature type="topological domain" description="Cytoplasmic" evidence="3">
    <location>
        <begin position="356"/>
        <end position="360"/>
    </location>
</feature>
<feature type="transmembrane region" description="Helical; Name=9" evidence="3">
    <location>
        <begin position="361"/>
        <end position="381"/>
    </location>
</feature>
<feature type="topological domain" description="Extracellular" evidence="3">
    <location>
        <begin position="382"/>
        <end position="392"/>
    </location>
</feature>
<feature type="transmembrane region" description="Helical; Name=10" evidence="3">
    <location>
        <begin position="393"/>
        <end position="413"/>
    </location>
</feature>
<feature type="topological domain" description="Cytoplasmic" evidence="3">
    <location>
        <begin position="414"/>
        <end position="417"/>
    </location>
</feature>
<feature type="transmembrane region" description="Helical; Name=11" evidence="3">
    <location>
        <begin position="418"/>
        <end position="438"/>
    </location>
</feature>
<feature type="topological domain" description="Extracellular" evidence="3">
    <location>
        <begin position="439"/>
        <end position="443"/>
    </location>
</feature>
<feature type="transmembrane region" description="Helical; Name=12" evidence="3">
    <location>
        <begin position="444"/>
        <end position="465"/>
    </location>
</feature>
<feature type="topological domain" description="Cytoplasmic" evidence="3">
    <location>
        <begin position="466"/>
        <end position="517"/>
    </location>
</feature>
<feature type="region of interest" description="Disordered" evidence="5">
    <location>
        <begin position="100"/>
        <end position="119"/>
    </location>
</feature>
<feature type="compositionally biased region" description="Low complexity" evidence="5">
    <location>
        <begin position="105"/>
        <end position="115"/>
    </location>
</feature>
<feature type="binding site" evidence="3">
    <location>
        <position position="231"/>
    </location>
    <ligand>
        <name>serotonin</name>
        <dbReference type="ChEBI" id="CHEBI:350546"/>
    </ligand>
</feature>
<feature type="binding site" evidence="3">
    <location>
        <position position="235"/>
    </location>
    <ligand>
        <name>serotonin</name>
        <dbReference type="ChEBI" id="CHEBI:350546"/>
    </ligand>
</feature>
<feature type="binding site" evidence="3">
    <location>
        <position position="308"/>
    </location>
    <ligand>
        <name>serotonin</name>
        <dbReference type="ChEBI" id="CHEBI:350546"/>
    </ligand>
</feature>
<feature type="binding site" evidence="3">
    <location>
        <position position="311"/>
    </location>
    <ligand>
        <name>serotonin</name>
        <dbReference type="ChEBI" id="CHEBI:350546"/>
    </ligand>
</feature>
<feature type="binding site" evidence="3">
    <location>
        <position position="315"/>
    </location>
    <ligand>
        <name>serotonin</name>
        <dbReference type="ChEBI" id="CHEBI:350546"/>
    </ligand>
</feature>
<feature type="binding site" evidence="3">
    <location>
        <position position="337"/>
    </location>
    <ligand>
        <name>serotonin</name>
        <dbReference type="ChEBI" id="CHEBI:350546"/>
    </ligand>
</feature>
<feature type="binding site" evidence="3">
    <location>
        <position position="344"/>
    </location>
    <ligand>
        <name>serotonin</name>
        <dbReference type="ChEBI" id="CHEBI:350546"/>
    </ligand>
</feature>
<feature type="binding site" evidence="3">
    <location>
        <position position="402"/>
    </location>
    <ligand>
        <name>serotonin</name>
        <dbReference type="ChEBI" id="CHEBI:350546"/>
    </ligand>
</feature>
<feature type="binding site" evidence="3">
    <location>
        <position position="436"/>
    </location>
    <ligand>
        <name>serotonin</name>
        <dbReference type="ChEBI" id="CHEBI:350546"/>
    </ligand>
</feature>
<feature type="modified residue" description="Phosphoserine; by CK2" evidence="2">
    <location>
        <position position="514"/>
    </location>
</feature>
<feature type="modified residue" description="Phosphoserine; by CK2" evidence="2">
    <location>
        <position position="516"/>
    </location>
</feature>
<feature type="glycosylation site" description="N-linked (GlcNAc...) asparagine" evidence="4">
    <location>
        <position position="56"/>
    </location>
</feature>
<feature type="glycosylation site" description="N-linked (GlcNAc...) asparagine" evidence="4">
    <location>
        <position position="83"/>
    </location>
</feature>
<feature type="glycosylation site" description="N-linked (GlcNAc...) asparagine" evidence="4">
    <location>
        <position position="84"/>
    </location>
</feature>
<feature type="glycosylation site" description="N-linked (GlcNAc...) asparagine" evidence="4">
    <location>
        <position position="91"/>
    </location>
</feature>
<feature type="glycosylation site" description="N-linked (GlcNAc...) asparagine" evidence="4">
    <location>
        <position position="113"/>
    </location>
</feature>
<feature type="disulfide bond" evidence="1">
    <location>
        <begin position="120"/>
        <end position="327"/>
    </location>
</feature>
<feature type="sequence conflict" description="In Ref. 2; BAC28501." evidence="9" ref="2">
    <original>P</original>
    <variation>T</variation>
    <location>
        <position position="150"/>
    </location>
</feature>